<protein>
    <recommendedName>
        <fullName>Flagellin B2</fullName>
    </recommendedName>
</protein>
<accession>P95317</accession>
<accession>A6UQU8</accession>
<evidence type="ECO:0000250" key="1"/>
<evidence type="ECO:0000305" key="2"/>
<reference key="1">
    <citation type="journal article" date="1998" name="Mol. Gen. Genet.">
        <title>Flagellin genes of Methanococcus vannielii: amplification by the polymerase chain reaction, demonstration of signal peptides and identification of major components of the flagellar filament.</title>
        <authorList>
            <person name="Bayley D.P."/>
            <person name="Florian V."/>
            <person name="Klein A."/>
            <person name="Jarrell K.F."/>
        </authorList>
    </citation>
    <scope>NUCLEOTIDE SEQUENCE [GENOMIC DNA]</scope>
</reference>
<reference key="2">
    <citation type="submission" date="2007-06" db="EMBL/GenBank/DDBJ databases">
        <title>Complete sequence of Methanococcus vannielii SB.</title>
        <authorList>
            <consortium name="US DOE Joint Genome Institute"/>
            <person name="Copeland A."/>
            <person name="Lucas S."/>
            <person name="Lapidus A."/>
            <person name="Barry K."/>
            <person name="Glavina del Rio T."/>
            <person name="Dalin E."/>
            <person name="Tice H."/>
            <person name="Pitluck S."/>
            <person name="Chain P."/>
            <person name="Malfatti S."/>
            <person name="Shin M."/>
            <person name="Vergez L."/>
            <person name="Schmutz J."/>
            <person name="Larimer F."/>
            <person name="Land M."/>
            <person name="Hauser L."/>
            <person name="Kyrpides N."/>
            <person name="Anderson I."/>
            <person name="Sieprawska-Lupa M."/>
            <person name="Whitman W.B."/>
            <person name="Richardson P."/>
        </authorList>
    </citation>
    <scope>NUCLEOTIDE SEQUENCE [LARGE SCALE GENOMIC DNA]</scope>
    <source>
        <strain>ATCC 35089 / DSM 1224 / JCM 13029 / OCM 148 / SB</strain>
    </source>
</reference>
<organism>
    <name type="scientific">Methanococcus vannielii (strain ATCC 35089 / DSM 1224 / JCM 13029 / OCM 148 / SB)</name>
    <dbReference type="NCBI Taxonomy" id="406327"/>
    <lineage>
        <taxon>Archaea</taxon>
        <taxon>Methanobacteriati</taxon>
        <taxon>Methanobacteriota</taxon>
        <taxon>Methanomada group</taxon>
        <taxon>Methanococci</taxon>
        <taxon>Methanococcales</taxon>
        <taxon>Methanococcaceae</taxon>
        <taxon>Methanococcus</taxon>
    </lineage>
</organism>
<gene>
    <name type="primary">flaB2</name>
    <name type="ordered locus">Mevan_0967</name>
</gene>
<comment type="function">
    <text>Flagellin is the subunit protein which polymerizes to form the filaments of archaeal flagella.</text>
</comment>
<comment type="subcellular location">
    <subcellularLocation>
        <location>Archaeal flagellum</location>
    </subcellularLocation>
</comment>
<comment type="similarity">
    <text evidence="2">Belongs to the archaeal flagellin family.</text>
</comment>
<sequence length="222" mass="22910">MKITEFLNNKKGASGIGTLIVFIAMVLVAAVAASVLINTSGFLQQKAATTGKESTEQVASGLQVLQIMGVHDSSNITKLAVYIAPNAGSSAVDLSQSVVTLSNGDVKSIFKYDTTDAAADKSYGAVKTGGSLFAEATLNISNMTNTQFGIIVIQDADGSCKAATPVLNKGDIVAIVLNLNETMTEPRTAITGSIQPEFGAPGIISFTTPATYLDGSTVVQLQ</sequence>
<feature type="propeptide" id="PRO_0000009381" evidence="1">
    <location>
        <begin position="1"/>
        <end position="12"/>
    </location>
</feature>
<feature type="chain" id="PRO_0000009382" description="Flagellin B2">
    <location>
        <begin position="13"/>
        <end position="222"/>
    </location>
</feature>
<feature type="sequence conflict" description="In Ref. 1; AAC27726." evidence="2" ref="1">
    <original>SN</original>
    <variation>QI</variation>
    <location>
        <begin position="141"/>
        <end position="142"/>
    </location>
</feature>
<feature type="sequence conflict" description="In Ref. 1; AAC27726." evidence="2" ref="1">
    <original>QPEFGAPGII</original>
    <variation>PTGIWCSRIM</variation>
    <location>
        <begin position="195"/>
        <end position="204"/>
    </location>
</feature>
<name>FLAB2_METVS</name>
<proteinExistence type="inferred from homology"/>
<keyword id="KW-0974">Archaeal flagellum</keyword>
<dbReference type="EMBL" id="U76620">
    <property type="protein sequence ID" value="AAC27726.1"/>
    <property type="molecule type" value="Genomic_DNA"/>
</dbReference>
<dbReference type="EMBL" id="CP000742">
    <property type="protein sequence ID" value="ABR54870.1"/>
    <property type="molecule type" value="Genomic_DNA"/>
</dbReference>
<dbReference type="RefSeq" id="WP_012065799.1">
    <property type="nucleotide sequence ID" value="NC_009634.1"/>
</dbReference>
<dbReference type="SMR" id="P95317"/>
<dbReference type="STRING" id="406327.Mevan_0967"/>
<dbReference type="GeneID" id="5325881"/>
<dbReference type="KEGG" id="mvn:Mevan_0967"/>
<dbReference type="eggNOG" id="arCOG01829">
    <property type="taxonomic scope" value="Archaea"/>
</dbReference>
<dbReference type="HOGENOM" id="CLU_051124_0_1_2"/>
<dbReference type="OrthoDB" id="102632at2157"/>
<dbReference type="Proteomes" id="UP000001107">
    <property type="component" value="Chromosome"/>
</dbReference>
<dbReference type="GO" id="GO:0097589">
    <property type="term" value="C:archaeal-type flagellum"/>
    <property type="evidence" value="ECO:0007669"/>
    <property type="project" value="UniProtKB-SubCell"/>
</dbReference>
<dbReference type="GO" id="GO:0005198">
    <property type="term" value="F:structural molecule activity"/>
    <property type="evidence" value="ECO:0007669"/>
    <property type="project" value="InterPro"/>
</dbReference>
<dbReference type="GO" id="GO:0097588">
    <property type="term" value="P:archaeal or bacterial-type flagellum-dependent cell motility"/>
    <property type="evidence" value="ECO:0007669"/>
    <property type="project" value="InterPro"/>
</dbReference>
<dbReference type="InterPro" id="IPR013373">
    <property type="entry name" value="Flagellin/pilin_N_arc"/>
</dbReference>
<dbReference type="InterPro" id="IPR002774">
    <property type="entry name" value="Flagellin_arc"/>
</dbReference>
<dbReference type="NCBIfam" id="TIGR02537">
    <property type="entry name" value="arch_flag_Nterm"/>
    <property type="match status" value="1"/>
</dbReference>
<dbReference type="NCBIfam" id="NF006325">
    <property type="entry name" value="PRK08541.1"/>
    <property type="match status" value="1"/>
</dbReference>
<dbReference type="PANTHER" id="PTHR35903">
    <property type="entry name" value="FLAGELLIN B1"/>
    <property type="match status" value="1"/>
</dbReference>
<dbReference type="PANTHER" id="PTHR35903:SF1">
    <property type="entry name" value="FLAGELLIN B1"/>
    <property type="match status" value="1"/>
</dbReference>
<dbReference type="Pfam" id="PF01917">
    <property type="entry name" value="Arch_flagellin"/>
    <property type="match status" value="1"/>
</dbReference>